<comment type="subunit">
    <text evidence="1">Part of the 50S ribosomal subunit.</text>
</comment>
<comment type="similarity">
    <text evidence="1">Belongs to the universal ribosomal protein uL30 family.</text>
</comment>
<protein>
    <recommendedName>
        <fullName evidence="1">Large ribosomal subunit protein uL30</fullName>
    </recommendedName>
    <alternativeName>
        <fullName evidence="2">50S ribosomal protein L30</fullName>
    </alternativeName>
</protein>
<dbReference type="EMBL" id="CP000407">
    <property type="protein sequence ID" value="ABP89060.1"/>
    <property type="molecule type" value="Genomic_DNA"/>
</dbReference>
<dbReference type="SMR" id="A4VSH1"/>
<dbReference type="STRING" id="391295.SSU05_0088"/>
<dbReference type="KEGG" id="ssu:SSU05_0088"/>
<dbReference type="eggNOG" id="COG1841">
    <property type="taxonomic scope" value="Bacteria"/>
</dbReference>
<dbReference type="HOGENOM" id="CLU_131047_2_1_9"/>
<dbReference type="GO" id="GO:0022625">
    <property type="term" value="C:cytosolic large ribosomal subunit"/>
    <property type="evidence" value="ECO:0007669"/>
    <property type="project" value="TreeGrafter"/>
</dbReference>
<dbReference type="GO" id="GO:0003735">
    <property type="term" value="F:structural constituent of ribosome"/>
    <property type="evidence" value="ECO:0007669"/>
    <property type="project" value="InterPro"/>
</dbReference>
<dbReference type="GO" id="GO:0006412">
    <property type="term" value="P:translation"/>
    <property type="evidence" value="ECO:0007669"/>
    <property type="project" value="UniProtKB-UniRule"/>
</dbReference>
<dbReference type="CDD" id="cd01658">
    <property type="entry name" value="Ribosomal_L30"/>
    <property type="match status" value="1"/>
</dbReference>
<dbReference type="FunFam" id="3.30.1390.20:FF:000001">
    <property type="entry name" value="50S ribosomal protein L30"/>
    <property type="match status" value="1"/>
</dbReference>
<dbReference type="Gene3D" id="3.30.1390.20">
    <property type="entry name" value="Ribosomal protein L30, ferredoxin-like fold domain"/>
    <property type="match status" value="1"/>
</dbReference>
<dbReference type="HAMAP" id="MF_01371_B">
    <property type="entry name" value="Ribosomal_uL30_B"/>
    <property type="match status" value="1"/>
</dbReference>
<dbReference type="InterPro" id="IPR036919">
    <property type="entry name" value="Ribo_uL30_ferredoxin-like_sf"/>
</dbReference>
<dbReference type="InterPro" id="IPR005996">
    <property type="entry name" value="Ribosomal_uL30_bac-type"/>
</dbReference>
<dbReference type="InterPro" id="IPR018038">
    <property type="entry name" value="Ribosomal_uL30_CS"/>
</dbReference>
<dbReference type="InterPro" id="IPR016082">
    <property type="entry name" value="Ribosomal_uL30_ferredoxin-like"/>
</dbReference>
<dbReference type="NCBIfam" id="TIGR01308">
    <property type="entry name" value="rpmD_bact"/>
    <property type="match status" value="1"/>
</dbReference>
<dbReference type="PANTHER" id="PTHR15892:SF2">
    <property type="entry name" value="LARGE RIBOSOMAL SUBUNIT PROTEIN UL30M"/>
    <property type="match status" value="1"/>
</dbReference>
<dbReference type="PANTHER" id="PTHR15892">
    <property type="entry name" value="MITOCHONDRIAL RIBOSOMAL PROTEIN L30"/>
    <property type="match status" value="1"/>
</dbReference>
<dbReference type="Pfam" id="PF00327">
    <property type="entry name" value="Ribosomal_L30"/>
    <property type="match status" value="1"/>
</dbReference>
<dbReference type="PIRSF" id="PIRSF002211">
    <property type="entry name" value="Ribosomal_L30_bac-type"/>
    <property type="match status" value="1"/>
</dbReference>
<dbReference type="SUPFAM" id="SSF55129">
    <property type="entry name" value="Ribosomal protein L30p/L7e"/>
    <property type="match status" value="1"/>
</dbReference>
<dbReference type="PROSITE" id="PS00634">
    <property type="entry name" value="RIBOSOMAL_L30"/>
    <property type="match status" value="1"/>
</dbReference>
<sequence>MAQIKITLTKSPIGRKPEQRKTVVALGLGKLNSSVVKEDNPAILGMVNAISHLVTVEEVK</sequence>
<reference key="1">
    <citation type="journal article" date="2007" name="PLoS ONE">
        <title>A glimpse of streptococcal toxic shock syndrome from comparative genomics of S. suis 2 Chinese isolates.</title>
        <authorList>
            <person name="Chen C."/>
            <person name="Tang J."/>
            <person name="Dong W."/>
            <person name="Wang C."/>
            <person name="Feng Y."/>
            <person name="Wang J."/>
            <person name="Zheng F."/>
            <person name="Pan X."/>
            <person name="Liu D."/>
            <person name="Li M."/>
            <person name="Song Y."/>
            <person name="Zhu X."/>
            <person name="Sun H."/>
            <person name="Feng T."/>
            <person name="Guo Z."/>
            <person name="Ju A."/>
            <person name="Ge J."/>
            <person name="Dong Y."/>
            <person name="Sun W."/>
            <person name="Jiang Y."/>
            <person name="Wang J."/>
            <person name="Yan J."/>
            <person name="Yang H."/>
            <person name="Wang X."/>
            <person name="Gao G.F."/>
            <person name="Yang R."/>
            <person name="Wang J."/>
            <person name="Yu J."/>
        </authorList>
    </citation>
    <scope>NUCLEOTIDE SEQUENCE [LARGE SCALE GENOMIC DNA]</scope>
    <source>
        <strain>05ZYH33</strain>
    </source>
</reference>
<gene>
    <name evidence="1" type="primary">rpmD</name>
    <name type="ordered locus">SSU05_0088</name>
</gene>
<keyword id="KW-0687">Ribonucleoprotein</keyword>
<keyword id="KW-0689">Ribosomal protein</keyword>
<accession>A4VSH1</accession>
<name>RL30_STRSY</name>
<evidence type="ECO:0000255" key="1">
    <source>
        <dbReference type="HAMAP-Rule" id="MF_01371"/>
    </source>
</evidence>
<evidence type="ECO:0000305" key="2"/>
<organism>
    <name type="scientific">Streptococcus suis (strain 05ZYH33)</name>
    <dbReference type="NCBI Taxonomy" id="391295"/>
    <lineage>
        <taxon>Bacteria</taxon>
        <taxon>Bacillati</taxon>
        <taxon>Bacillota</taxon>
        <taxon>Bacilli</taxon>
        <taxon>Lactobacillales</taxon>
        <taxon>Streptococcaceae</taxon>
        <taxon>Streptococcus</taxon>
    </lineage>
</organism>
<proteinExistence type="inferred from homology"/>
<feature type="chain" id="PRO_1000056120" description="Large ribosomal subunit protein uL30">
    <location>
        <begin position="1"/>
        <end position="60"/>
    </location>
</feature>